<feature type="chain" id="PRO_0000389860" description="Acetyl-coenzyme A carboxylase carboxyl transferase subunit beta">
    <location>
        <begin position="1"/>
        <end position="285"/>
    </location>
</feature>
<feature type="domain" description="CoA carboxyltransferase N-terminal" evidence="2">
    <location>
        <begin position="29"/>
        <end position="285"/>
    </location>
</feature>
<feature type="zinc finger region" description="C4-type" evidence="1">
    <location>
        <begin position="33"/>
        <end position="55"/>
    </location>
</feature>
<feature type="binding site" evidence="1">
    <location>
        <position position="33"/>
    </location>
    <ligand>
        <name>Zn(2+)</name>
        <dbReference type="ChEBI" id="CHEBI:29105"/>
    </ligand>
</feature>
<feature type="binding site" evidence="1">
    <location>
        <position position="36"/>
    </location>
    <ligand>
        <name>Zn(2+)</name>
        <dbReference type="ChEBI" id="CHEBI:29105"/>
    </ligand>
</feature>
<feature type="binding site" evidence="1">
    <location>
        <position position="52"/>
    </location>
    <ligand>
        <name>Zn(2+)</name>
        <dbReference type="ChEBI" id="CHEBI:29105"/>
    </ligand>
</feature>
<feature type="binding site" evidence="1">
    <location>
        <position position="55"/>
    </location>
    <ligand>
        <name>Zn(2+)</name>
        <dbReference type="ChEBI" id="CHEBI:29105"/>
    </ligand>
</feature>
<reference key="1">
    <citation type="journal article" date="2006" name="Lancet">
        <title>Complete genome sequence of USA300, an epidemic clone of community-acquired meticillin-resistant Staphylococcus aureus.</title>
        <authorList>
            <person name="Diep B.A."/>
            <person name="Gill S.R."/>
            <person name="Chang R.F."/>
            <person name="Phan T.H."/>
            <person name="Chen J.H."/>
            <person name="Davidson M.G."/>
            <person name="Lin F."/>
            <person name="Lin J."/>
            <person name="Carleton H.A."/>
            <person name="Mongodin E.F."/>
            <person name="Sensabaugh G.F."/>
            <person name="Perdreau-Remington F."/>
        </authorList>
    </citation>
    <scope>NUCLEOTIDE SEQUENCE [LARGE SCALE GENOMIC DNA]</scope>
    <source>
        <strain>USA300</strain>
    </source>
</reference>
<protein>
    <recommendedName>
        <fullName evidence="1">Acetyl-coenzyme A carboxylase carboxyl transferase subunit beta</fullName>
        <shortName evidence="1">ACCase subunit beta</shortName>
        <shortName evidence="1">Acetyl-CoA carboxylase carboxyltransferase subunit beta</shortName>
        <ecNumber evidence="1">2.1.3.15</ecNumber>
    </recommendedName>
</protein>
<evidence type="ECO:0000255" key="1">
    <source>
        <dbReference type="HAMAP-Rule" id="MF_01395"/>
    </source>
</evidence>
<evidence type="ECO:0000255" key="2">
    <source>
        <dbReference type="PROSITE-ProRule" id="PRU01136"/>
    </source>
</evidence>
<gene>
    <name evidence="1" type="primary">accD</name>
    <name type="ordered locus">SAUSA300_1647</name>
</gene>
<accession>Q2FG37</accession>
<comment type="function">
    <text evidence="1">Component of the acetyl coenzyme A carboxylase (ACC) complex. Biotin carboxylase (BC) catalyzes the carboxylation of biotin on its carrier protein (BCCP) and then the CO(2) group is transferred by the transcarboxylase to acetyl-CoA to form malonyl-CoA.</text>
</comment>
<comment type="catalytic activity">
    <reaction evidence="1">
        <text>N(6)-carboxybiotinyl-L-lysyl-[protein] + acetyl-CoA = N(6)-biotinyl-L-lysyl-[protein] + malonyl-CoA</text>
        <dbReference type="Rhea" id="RHEA:54728"/>
        <dbReference type="Rhea" id="RHEA-COMP:10505"/>
        <dbReference type="Rhea" id="RHEA-COMP:10506"/>
        <dbReference type="ChEBI" id="CHEBI:57288"/>
        <dbReference type="ChEBI" id="CHEBI:57384"/>
        <dbReference type="ChEBI" id="CHEBI:83144"/>
        <dbReference type="ChEBI" id="CHEBI:83145"/>
        <dbReference type="EC" id="2.1.3.15"/>
    </reaction>
</comment>
<comment type="cofactor">
    <cofactor evidence="1">
        <name>Zn(2+)</name>
        <dbReference type="ChEBI" id="CHEBI:29105"/>
    </cofactor>
    <text evidence="1">Binds 1 zinc ion per subunit.</text>
</comment>
<comment type="pathway">
    <text evidence="1">Lipid metabolism; malonyl-CoA biosynthesis; malonyl-CoA from acetyl-CoA: step 1/1.</text>
</comment>
<comment type="subunit">
    <text evidence="1">Acetyl-CoA carboxylase is a heterohexamer composed of biotin carboxyl carrier protein (AccB), biotin carboxylase (AccC) and two subunits each of ACCase subunit alpha (AccA) and ACCase subunit beta (AccD).</text>
</comment>
<comment type="subcellular location">
    <subcellularLocation>
        <location evidence="1">Cytoplasm</location>
    </subcellularLocation>
</comment>
<comment type="similarity">
    <text evidence="1">Belongs to the AccD/PCCB family.</text>
</comment>
<name>ACCD_STAA3</name>
<dbReference type="EC" id="2.1.3.15" evidence="1"/>
<dbReference type="EMBL" id="CP000255">
    <property type="protein sequence ID" value="ABD22218.1"/>
    <property type="molecule type" value="Genomic_DNA"/>
</dbReference>
<dbReference type="RefSeq" id="WP_000471571.1">
    <property type="nucleotide sequence ID" value="NZ_CP027476.1"/>
</dbReference>
<dbReference type="SMR" id="Q2FG37"/>
<dbReference type="KEGG" id="saa:SAUSA300_1647"/>
<dbReference type="HOGENOM" id="CLU_015486_1_0_9"/>
<dbReference type="OMA" id="PEGLWIK"/>
<dbReference type="UniPathway" id="UPA00655">
    <property type="reaction ID" value="UER00711"/>
</dbReference>
<dbReference type="Proteomes" id="UP000001939">
    <property type="component" value="Chromosome"/>
</dbReference>
<dbReference type="GO" id="GO:0009317">
    <property type="term" value="C:acetyl-CoA carboxylase complex"/>
    <property type="evidence" value="ECO:0007669"/>
    <property type="project" value="InterPro"/>
</dbReference>
<dbReference type="GO" id="GO:0003989">
    <property type="term" value="F:acetyl-CoA carboxylase activity"/>
    <property type="evidence" value="ECO:0007669"/>
    <property type="project" value="InterPro"/>
</dbReference>
<dbReference type="GO" id="GO:0005524">
    <property type="term" value="F:ATP binding"/>
    <property type="evidence" value="ECO:0007669"/>
    <property type="project" value="UniProtKB-KW"/>
</dbReference>
<dbReference type="GO" id="GO:0016743">
    <property type="term" value="F:carboxyl- or carbamoyltransferase activity"/>
    <property type="evidence" value="ECO:0007669"/>
    <property type="project" value="UniProtKB-UniRule"/>
</dbReference>
<dbReference type="GO" id="GO:0008270">
    <property type="term" value="F:zinc ion binding"/>
    <property type="evidence" value="ECO:0007669"/>
    <property type="project" value="UniProtKB-UniRule"/>
</dbReference>
<dbReference type="GO" id="GO:0006633">
    <property type="term" value="P:fatty acid biosynthetic process"/>
    <property type="evidence" value="ECO:0007669"/>
    <property type="project" value="UniProtKB-KW"/>
</dbReference>
<dbReference type="GO" id="GO:2001295">
    <property type="term" value="P:malonyl-CoA biosynthetic process"/>
    <property type="evidence" value="ECO:0007669"/>
    <property type="project" value="UniProtKB-UniRule"/>
</dbReference>
<dbReference type="Gene3D" id="3.90.226.10">
    <property type="entry name" value="2-enoyl-CoA Hydratase, Chain A, domain 1"/>
    <property type="match status" value="1"/>
</dbReference>
<dbReference type="HAMAP" id="MF_01395">
    <property type="entry name" value="AcetylCoA_CT_beta"/>
    <property type="match status" value="1"/>
</dbReference>
<dbReference type="InterPro" id="IPR034733">
    <property type="entry name" value="AcCoA_carboxyl_beta"/>
</dbReference>
<dbReference type="InterPro" id="IPR000438">
    <property type="entry name" value="Acetyl_CoA_COase_Trfase_b_su"/>
</dbReference>
<dbReference type="InterPro" id="IPR029045">
    <property type="entry name" value="ClpP/crotonase-like_dom_sf"/>
</dbReference>
<dbReference type="InterPro" id="IPR011762">
    <property type="entry name" value="COA_CT_N"/>
</dbReference>
<dbReference type="InterPro" id="IPR041010">
    <property type="entry name" value="Znf-ACC"/>
</dbReference>
<dbReference type="NCBIfam" id="TIGR00515">
    <property type="entry name" value="accD"/>
    <property type="match status" value="1"/>
</dbReference>
<dbReference type="PANTHER" id="PTHR42995">
    <property type="entry name" value="ACETYL-COENZYME A CARBOXYLASE CARBOXYL TRANSFERASE SUBUNIT BETA, CHLOROPLASTIC"/>
    <property type="match status" value="1"/>
</dbReference>
<dbReference type="PANTHER" id="PTHR42995:SF5">
    <property type="entry name" value="ACETYL-COENZYME A CARBOXYLASE CARBOXYL TRANSFERASE SUBUNIT BETA, CHLOROPLASTIC"/>
    <property type="match status" value="1"/>
</dbReference>
<dbReference type="Pfam" id="PF01039">
    <property type="entry name" value="Carboxyl_trans"/>
    <property type="match status" value="1"/>
</dbReference>
<dbReference type="Pfam" id="PF17848">
    <property type="entry name" value="Zn_ribbon_ACC"/>
    <property type="match status" value="1"/>
</dbReference>
<dbReference type="PRINTS" id="PR01070">
    <property type="entry name" value="ACCCTRFRASEB"/>
</dbReference>
<dbReference type="SUPFAM" id="SSF52096">
    <property type="entry name" value="ClpP/crotonase"/>
    <property type="match status" value="1"/>
</dbReference>
<dbReference type="PROSITE" id="PS50980">
    <property type="entry name" value="COA_CT_NTER"/>
    <property type="match status" value="1"/>
</dbReference>
<proteinExistence type="inferred from homology"/>
<sequence>MFKDFFNRTKKKKYLTVQDSKNNDVPAGIMTKCPKCKKIMYTKELAENLNVCFNCDHHIALTAYKRIEAISDEGSFTEFDKGMTSANPLDFPSYLEKIEKDQQKTGLKEAVVTGTAQLDGMKFGVAVMDSRFRMGSMGSVIGEKICRIIDYCTENRLPFILFSASGGARMQEGIISLMQMGKTSVSLKRHSDAGLLYISYLTHPTTGGVSASFASVGDINLSEPKALIGFAGRRVIEQTINEKLPDDFQTAEFLLEHGQLDKVVHRNDMRQTLSEILKIHQEVTK</sequence>
<keyword id="KW-0067">ATP-binding</keyword>
<keyword id="KW-0963">Cytoplasm</keyword>
<keyword id="KW-0275">Fatty acid biosynthesis</keyword>
<keyword id="KW-0276">Fatty acid metabolism</keyword>
<keyword id="KW-0444">Lipid biosynthesis</keyword>
<keyword id="KW-0443">Lipid metabolism</keyword>
<keyword id="KW-0479">Metal-binding</keyword>
<keyword id="KW-0547">Nucleotide-binding</keyword>
<keyword id="KW-0808">Transferase</keyword>
<keyword id="KW-0862">Zinc</keyword>
<keyword id="KW-0863">Zinc-finger</keyword>
<organism>
    <name type="scientific">Staphylococcus aureus (strain USA300)</name>
    <dbReference type="NCBI Taxonomy" id="367830"/>
    <lineage>
        <taxon>Bacteria</taxon>
        <taxon>Bacillati</taxon>
        <taxon>Bacillota</taxon>
        <taxon>Bacilli</taxon>
        <taxon>Bacillales</taxon>
        <taxon>Staphylococcaceae</taxon>
        <taxon>Staphylococcus</taxon>
    </lineage>
</organism>